<sequence>MLNKQNKLYLQAQAYWDFLRIEKQVSPHTLTNYQRQLLAISEMLIAAQIDDWQAVDASVVRWILTQSHKQGLGAKSIGLRLVVLRQWFAYLVQRHYVKVNPAVGIKAPKVARHLPKNIDAERMGQLLDVEVDEPADIRDLAMMELMYSSGLRLAELQRLDLGDMDLIDAEVRLLGKGNKERIVPIGSRALTALQAWLTVRPSFNPQDNALFLNKRGGRLSHRSIQLAMQKWGERQGLATRLHPHKLRHSFATHLLEASTDLRAVQELLGHSSLSTTQIYTHLDFQHLAKIYDASHPRARRKRED</sequence>
<name>XERC_HAEDU</name>
<accession>Q7VKG8</accession>
<keyword id="KW-0131">Cell cycle</keyword>
<keyword id="KW-0132">Cell division</keyword>
<keyword id="KW-0159">Chromosome partition</keyword>
<keyword id="KW-0963">Cytoplasm</keyword>
<keyword id="KW-0229">DNA integration</keyword>
<keyword id="KW-0233">DNA recombination</keyword>
<keyword id="KW-0238">DNA-binding</keyword>
<keyword id="KW-1185">Reference proteome</keyword>
<proteinExistence type="inferred from homology"/>
<dbReference type="EMBL" id="AE017143">
    <property type="protein sequence ID" value="AAP96660.1"/>
    <property type="molecule type" value="Genomic_DNA"/>
</dbReference>
<dbReference type="RefSeq" id="WP_010945687.1">
    <property type="nucleotide sequence ID" value="NC_002940.2"/>
</dbReference>
<dbReference type="SMR" id="Q7VKG8"/>
<dbReference type="STRING" id="233412.HD_1940"/>
<dbReference type="KEGG" id="hdu:HD_1940"/>
<dbReference type="eggNOG" id="COG4973">
    <property type="taxonomic scope" value="Bacteria"/>
</dbReference>
<dbReference type="HOGENOM" id="CLU_027562_9_0_6"/>
<dbReference type="OrthoDB" id="9801717at2"/>
<dbReference type="Proteomes" id="UP000001022">
    <property type="component" value="Chromosome"/>
</dbReference>
<dbReference type="GO" id="GO:0005737">
    <property type="term" value="C:cytoplasm"/>
    <property type="evidence" value="ECO:0007669"/>
    <property type="project" value="UniProtKB-SubCell"/>
</dbReference>
<dbReference type="GO" id="GO:0003677">
    <property type="term" value="F:DNA binding"/>
    <property type="evidence" value="ECO:0007669"/>
    <property type="project" value="UniProtKB-KW"/>
</dbReference>
<dbReference type="GO" id="GO:0009037">
    <property type="term" value="F:tyrosine-based site-specific recombinase activity"/>
    <property type="evidence" value="ECO:0007669"/>
    <property type="project" value="UniProtKB-UniRule"/>
</dbReference>
<dbReference type="GO" id="GO:0051301">
    <property type="term" value="P:cell division"/>
    <property type="evidence" value="ECO:0007669"/>
    <property type="project" value="UniProtKB-KW"/>
</dbReference>
<dbReference type="GO" id="GO:0007059">
    <property type="term" value="P:chromosome segregation"/>
    <property type="evidence" value="ECO:0007669"/>
    <property type="project" value="UniProtKB-UniRule"/>
</dbReference>
<dbReference type="GO" id="GO:0006313">
    <property type="term" value="P:DNA transposition"/>
    <property type="evidence" value="ECO:0007669"/>
    <property type="project" value="UniProtKB-UniRule"/>
</dbReference>
<dbReference type="CDD" id="cd00798">
    <property type="entry name" value="INT_XerDC_C"/>
    <property type="match status" value="1"/>
</dbReference>
<dbReference type="Gene3D" id="1.10.150.130">
    <property type="match status" value="1"/>
</dbReference>
<dbReference type="Gene3D" id="1.10.443.10">
    <property type="entry name" value="Intergrase catalytic core"/>
    <property type="match status" value="1"/>
</dbReference>
<dbReference type="HAMAP" id="MF_01808">
    <property type="entry name" value="Recomb_XerC_XerD"/>
    <property type="match status" value="1"/>
</dbReference>
<dbReference type="InterPro" id="IPR044068">
    <property type="entry name" value="CB"/>
</dbReference>
<dbReference type="InterPro" id="IPR011010">
    <property type="entry name" value="DNA_brk_join_enz"/>
</dbReference>
<dbReference type="InterPro" id="IPR013762">
    <property type="entry name" value="Integrase-like_cat_sf"/>
</dbReference>
<dbReference type="InterPro" id="IPR002104">
    <property type="entry name" value="Integrase_catalytic"/>
</dbReference>
<dbReference type="InterPro" id="IPR010998">
    <property type="entry name" value="Integrase_recombinase_N"/>
</dbReference>
<dbReference type="InterPro" id="IPR004107">
    <property type="entry name" value="Integrase_SAM-like_N"/>
</dbReference>
<dbReference type="InterPro" id="IPR011931">
    <property type="entry name" value="Recomb_XerC"/>
</dbReference>
<dbReference type="InterPro" id="IPR023009">
    <property type="entry name" value="Tyrosine_recombinase_XerC/XerD"/>
</dbReference>
<dbReference type="InterPro" id="IPR050090">
    <property type="entry name" value="Tyrosine_recombinase_XerCD"/>
</dbReference>
<dbReference type="NCBIfam" id="TIGR02224">
    <property type="entry name" value="recomb_XerC"/>
    <property type="match status" value="1"/>
</dbReference>
<dbReference type="PANTHER" id="PTHR30349">
    <property type="entry name" value="PHAGE INTEGRASE-RELATED"/>
    <property type="match status" value="1"/>
</dbReference>
<dbReference type="PANTHER" id="PTHR30349:SF81">
    <property type="entry name" value="TYROSINE RECOMBINASE XERC"/>
    <property type="match status" value="1"/>
</dbReference>
<dbReference type="Pfam" id="PF02899">
    <property type="entry name" value="Phage_int_SAM_1"/>
    <property type="match status" value="1"/>
</dbReference>
<dbReference type="Pfam" id="PF00589">
    <property type="entry name" value="Phage_integrase"/>
    <property type="match status" value="1"/>
</dbReference>
<dbReference type="SUPFAM" id="SSF56349">
    <property type="entry name" value="DNA breaking-rejoining enzymes"/>
    <property type="match status" value="1"/>
</dbReference>
<dbReference type="SUPFAM" id="SSF47823">
    <property type="entry name" value="lambda integrase-like, N-terminal domain"/>
    <property type="match status" value="1"/>
</dbReference>
<dbReference type="PROSITE" id="PS51900">
    <property type="entry name" value="CB"/>
    <property type="match status" value="1"/>
</dbReference>
<dbReference type="PROSITE" id="PS51898">
    <property type="entry name" value="TYR_RECOMBINASE"/>
    <property type="match status" value="1"/>
</dbReference>
<evidence type="ECO:0000255" key="1">
    <source>
        <dbReference type="HAMAP-Rule" id="MF_01808"/>
    </source>
</evidence>
<evidence type="ECO:0000255" key="2">
    <source>
        <dbReference type="PROSITE-ProRule" id="PRU01246"/>
    </source>
</evidence>
<evidence type="ECO:0000255" key="3">
    <source>
        <dbReference type="PROSITE-ProRule" id="PRU01248"/>
    </source>
</evidence>
<protein>
    <recommendedName>
        <fullName evidence="1">Tyrosine recombinase XerC</fullName>
    </recommendedName>
</protein>
<organism>
    <name type="scientific">Haemophilus ducreyi (strain 35000HP / ATCC 700724)</name>
    <dbReference type="NCBI Taxonomy" id="233412"/>
    <lineage>
        <taxon>Bacteria</taxon>
        <taxon>Pseudomonadati</taxon>
        <taxon>Pseudomonadota</taxon>
        <taxon>Gammaproteobacteria</taxon>
        <taxon>Pasteurellales</taxon>
        <taxon>Pasteurellaceae</taxon>
        <taxon>Haemophilus</taxon>
    </lineage>
</organism>
<feature type="chain" id="PRO_0000095297" description="Tyrosine recombinase XerC">
    <location>
        <begin position="1"/>
        <end position="304"/>
    </location>
</feature>
<feature type="domain" description="Core-binding (CB)" evidence="3">
    <location>
        <begin position="6"/>
        <end position="92"/>
    </location>
</feature>
<feature type="domain" description="Tyr recombinase" evidence="2">
    <location>
        <begin position="113"/>
        <end position="292"/>
    </location>
</feature>
<feature type="active site" evidence="1">
    <location>
        <position position="152"/>
    </location>
</feature>
<feature type="active site" evidence="1">
    <location>
        <position position="176"/>
    </location>
</feature>
<feature type="active site" evidence="1">
    <location>
        <position position="244"/>
    </location>
</feature>
<feature type="active site" evidence="1">
    <location>
        <position position="247"/>
    </location>
</feature>
<feature type="active site" evidence="1">
    <location>
        <position position="270"/>
    </location>
</feature>
<feature type="active site" description="O-(3'-phospho-DNA)-tyrosine intermediate" evidence="1">
    <location>
        <position position="279"/>
    </location>
</feature>
<comment type="function">
    <text evidence="1">Site-specific tyrosine recombinase, which acts by catalyzing the cutting and rejoining of the recombining DNA molecules. The XerC-XerD complex is essential to convert dimers of the bacterial chromosome into monomers to permit their segregation at cell division. It also contributes to the segregational stability of plasmids.</text>
</comment>
<comment type="subunit">
    <text evidence="1">Forms a cyclic heterotetrameric complex composed of two molecules of XerC and two molecules of XerD.</text>
</comment>
<comment type="subcellular location">
    <subcellularLocation>
        <location evidence="1">Cytoplasm</location>
    </subcellularLocation>
</comment>
<comment type="similarity">
    <text evidence="1">Belongs to the 'phage' integrase family. XerC subfamily.</text>
</comment>
<reference key="1">
    <citation type="submission" date="2003-06" db="EMBL/GenBank/DDBJ databases">
        <title>The complete genome sequence of Haemophilus ducreyi.</title>
        <authorList>
            <person name="Munson R.S. Jr."/>
            <person name="Ray W.C."/>
            <person name="Mahairas G."/>
            <person name="Sabo P."/>
            <person name="Mungur R."/>
            <person name="Johnson L."/>
            <person name="Nguyen D."/>
            <person name="Wang J."/>
            <person name="Forst C."/>
            <person name="Hood L."/>
        </authorList>
    </citation>
    <scope>NUCLEOTIDE SEQUENCE [LARGE SCALE GENOMIC DNA]</scope>
    <source>
        <strain>35000HP / ATCC 700724</strain>
    </source>
</reference>
<gene>
    <name evidence="1" type="primary">xerC</name>
    <name type="ordered locus">HD_1940</name>
</gene>